<dbReference type="EC" id="7.1.2.1"/>
<dbReference type="EMBL" id="M74075">
    <property type="protein sequence ID" value="AAA34319.1"/>
    <property type="molecule type" value="Genomic_DNA"/>
</dbReference>
<dbReference type="PIR" id="A41336">
    <property type="entry name" value="PXCKP"/>
</dbReference>
<dbReference type="SMR" id="P28877"/>
<dbReference type="VEuPathDB" id="FungiDB:C3_00720W_A"/>
<dbReference type="VEuPathDB" id="FungiDB:CAWG_02408"/>
<dbReference type="GO" id="GO:0005886">
    <property type="term" value="C:plasma membrane"/>
    <property type="evidence" value="ECO:0007669"/>
    <property type="project" value="UniProtKB-SubCell"/>
</dbReference>
<dbReference type="GO" id="GO:0005524">
    <property type="term" value="F:ATP binding"/>
    <property type="evidence" value="ECO:0007669"/>
    <property type="project" value="UniProtKB-KW"/>
</dbReference>
<dbReference type="GO" id="GO:0016887">
    <property type="term" value="F:ATP hydrolysis activity"/>
    <property type="evidence" value="ECO:0007669"/>
    <property type="project" value="InterPro"/>
</dbReference>
<dbReference type="GO" id="GO:0046872">
    <property type="term" value="F:metal ion binding"/>
    <property type="evidence" value="ECO:0007669"/>
    <property type="project" value="UniProtKB-KW"/>
</dbReference>
<dbReference type="GO" id="GO:0008553">
    <property type="term" value="F:P-type proton-exporting transporter activity"/>
    <property type="evidence" value="ECO:0007669"/>
    <property type="project" value="UniProtKB-EC"/>
</dbReference>
<dbReference type="GO" id="GO:0120029">
    <property type="term" value="P:proton export across plasma membrane"/>
    <property type="evidence" value="ECO:0007669"/>
    <property type="project" value="InterPro"/>
</dbReference>
<dbReference type="CDD" id="cd02076">
    <property type="entry name" value="P-type_ATPase_H"/>
    <property type="match status" value="1"/>
</dbReference>
<dbReference type="FunFam" id="2.70.150.10:FF:000011">
    <property type="entry name" value="Plasma membrane ATPase"/>
    <property type="match status" value="1"/>
</dbReference>
<dbReference type="FunFam" id="3.40.1110.10:FF:000005">
    <property type="entry name" value="Plasma membrane ATPase"/>
    <property type="match status" value="1"/>
</dbReference>
<dbReference type="FunFam" id="3.40.50.1000:FF:000008">
    <property type="entry name" value="Plasma membrane ATPase"/>
    <property type="match status" value="1"/>
</dbReference>
<dbReference type="Gene3D" id="3.40.1110.10">
    <property type="entry name" value="Calcium-transporting ATPase, cytoplasmic domain N"/>
    <property type="match status" value="1"/>
</dbReference>
<dbReference type="Gene3D" id="2.70.150.10">
    <property type="entry name" value="Calcium-transporting ATPase, cytoplasmic transduction domain A"/>
    <property type="match status" value="1"/>
</dbReference>
<dbReference type="Gene3D" id="1.20.1110.10">
    <property type="entry name" value="Calcium-transporting ATPase, transmembrane domain"/>
    <property type="match status" value="1"/>
</dbReference>
<dbReference type="Gene3D" id="3.40.50.1000">
    <property type="entry name" value="HAD superfamily/HAD-like"/>
    <property type="match status" value="1"/>
</dbReference>
<dbReference type="InterPro" id="IPR004014">
    <property type="entry name" value="ATPase_P-typ_cation-transptr_N"/>
</dbReference>
<dbReference type="InterPro" id="IPR023299">
    <property type="entry name" value="ATPase_P-typ_cyto_dom_N"/>
</dbReference>
<dbReference type="InterPro" id="IPR018303">
    <property type="entry name" value="ATPase_P-typ_P_site"/>
</dbReference>
<dbReference type="InterPro" id="IPR023298">
    <property type="entry name" value="ATPase_P-typ_TM_dom_sf"/>
</dbReference>
<dbReference type="InterPro" id="IPR008250">
    <property type="entry name" value="ATPase_P-typ_transduc_dom_A_sf"/>
</dbReference>
<dbReference type="InterPro" id="IPR036412">
    <property type="entry name" value="HAD-like_sf"/>
</dbReference>
<dbReference type="InterPro" id="IPR023214">
    <property type="entry name" value="HAD_sf"/>
</dbReference>
<dbReference type="InterPro" id="IPR006534">
    <property type="entry name" value="P-type_ATPase_IIIA"/>
</dbReference>
<dbReference type="InterPro" id="IPR001757">
    <property type="entry name" value="P_typ_ATPase"/>
</dbReference>
<dbReference type="InterPro" id="IPR044492">
    <property type="entry name" value="P_typ_ATPase_HD_dom"/>
</dbReference>
<dbReference type="NCBIfam" id="TIGR01647">
    <property type="entry name" value="ATPase-IIIA_H"/>
    <property type="match status" value="1"/>
</dbReference>
<dbReference type="NCBIfam" id="TIGR01494">
    <property type="entry name" value="ATPase_P-type"/>
    <property type="match status" value="2"/>
</dbReference>
<dbReference type="PANTHER" id="PTHR42861">
    <property type="entry name" value="CALCIUM-TRANSPORTING ATPASE"/>
    <property type="match status" value="1"/>
</dbReference>
<dbReference type="Pfam" id="PF00690">
    <property type="entry name" value="Cation_ATPase_N"/>
    <property type="match status" value="1"/>
</dbReference>
<dbReference type="Pfam" id="PF00122">
    <property type="entry name" value="E1-E2_ATPase"/>
    <property type="match status" value="1"/>
</dbReference>
<dbReference type="Pfam" id="PF00702">
    <property type="entry name" value="Hydrolase"/>
    <property type="match status" value="1"/>
</dbReference>
<dbReference type="PRINTS" id="PR00119">
    <property type="entry name" value="CATATPASE"/>
</dbReference>
<dbReference type="PRINTS" id="PR00120">
    <property type="entry name" value="HATPASE"/>
</dbReference>
<dbReference type="SFLD" id="SFLDG00002">
    <property type="entry name" value="C1.7:_P-type_atpase_like"/>
    <property type="match status" value="1"/>
</dbReference>
<dbReference type="SFLD" id="SFLDF00027">
    <property type="entry name" value="p-type_atpase"/>
    <property type="match status" value="1"/>
</dbReference>
<dbReference type="SMART" id="SM00831">
    <property type="entry name" value="Cation_ATPase_N"/>
    <property type="match status" value="1"/>
</dbReference>
<dbReference type="SUPFAM" id="SSF81653">
    <property type="entry name" value="Calcium ATPase, transduction domain A"/>
    <property type="match status" value="1"/>
</dbReference>
<dbReference type="SUPFAM" id="SSF81665">
    <property type="entry name" value="Calcium ATPase, transmembrane domain M"/>
    <property type="match status" value="1"/>
</dbReference>
<dbReference type="SUPFAM" id="SSF56784">
    <property type="entry name" value="HAD-like"/>
    <property type="match status" value="1"/>
</dbReference>
<dbReference type="PROSITE" id="PS00154">
    <property type="entry name" value="ATPASE_E1_E2"/>
    <property type="match status" value="1"/>
</dbReference>
<reference key="1">
    <citation type="journal article" date="1991" name="J. Bacteriol.">
        <title>Cloning and characterization of the plasma membrane H(+)-ATPase from Candida albicans.</title>
        <authorList>
            <person name="Monk B.C."/>
            <person name="Kurtz M.B."/>
            <person name="Marrinan J.A."/>
            <person name="Perlin D.S."/>
        </authorList>
    </citation>
    <scope>NUCLEOTIDE SEQUENCE [GENOMIC DNA]</scope>
    <scope>PARTIAL PROTEIN SEQUENCE</scope>
</reference>
<evidence type="ECO:0000250" key="1"/>
<evidence type="ECO:0000255" key="2"/>
<evidence type="ECO:0000256" key="3">
    <source>
        <dbReference type="SAM" id="MobiDB-lite"/>
    </source>
</evidence>
<evidence type="ECO:0000305" key="4"/>
<comment type="function">
    <text>The plasma membrane ATPase of plants and fungi is a hydrogen ion pump. The proton gradient it generates drives the active transport of nutrients by H(+)-symport. The resulting external acidification and/or internal alkinization may mediate growth responses.</text>
</comment>
<comment type="catalytic activity">
    <reaction>
        <text>ATP + H2O + H(+)(in) = ADP + phosphate + 2 H(+)(out)</text>
        <dbReference type="Rhea" id="RHEA:20852"/>
        <dbReference type="ChEBI" id="CHEBI:15377"/>
        <dbReference type="ChEBI" id="CHEBI:15378"/>
        <dbReference type="ChEBI" id="CHEBI:30616"/>
        <dbReference type="ChEBI" id="CHEBI:43474"/>
        <dbReference type="ChEBI" id="CHEBI:456216"/>
        <dbReference type="EC" id="7.1.2.1"/>
    </reaction>
</comment>
<comment type="subcellular location">
    <subcellularLocation>
        <location>Cell membrane</location>
        <topology>Multi-pass membrane protein</topology>
    </subcellularLocation>
</comment>
<comment type="similarity">
    <text evidence="4">Belongs to the cation transport ATPase (P-type) (TC 3.A.3) family. Type IIIA subfamily.</text>
</comment>
<name>PMA1_CANAX</name>
<feature type="chain" id="PRO_0000046266" description="Plasma membrane ATPase 1">
    <location>
        <begin position="1"/>
        <end position="895"/>
    </location>
</feature>
<feature type="topological domain" description="Cytoplasmic" evidence="2">
    <location>
        <begin position="1"/>
        <end position="92"/>
    </location>
</feature>
<feature type="transmembrane region" description="Helical; Name=1" evidence="2">
    <location>
        <begin position="93"/>
        <end position="113"/>
    </location>
</feature>
<feature type="topological domain" description="Extracellular" evidence="2">
    <location>
        <begin position="114"/>
        <end position="117"/>
    </location>
</feature>
<feature type="transmembrane region" description="Helical; Name=2" evidence="2">
    <location>
        <begin position="118"/>
        <end position="137"/>
    </location>
</feature>
<feature type="topological domain" description="Cytoplasmic" evidence="2">
    <location>
        <begin position="138"/>
        <end position="268"/>
    </location>
</feature>
<feature type="transmembrane region" description="Helical; Name=3" evidence="2">
    <location>
        <begin position="269"/>
        <end position="290"/>
    </location>
</feature>
<feature type="topological domain" description="Extracellular" evidence="2">
    <location>
        <begin position="291"/>
        <end position="301"/>
    </location>
</feature>
<feature type="transmembrane region" description="Helical; Name=4" evidence="2">
    <location>
        <begin position="302"/>
        <end position="324"/>
    </location>
</feature>
<feature type="topological domain" description="Cytoplasmic" evidence="2">
    <location>
        <begin position="325"/>
        <end position="696"/>
    </location>
</feature>
<feature type="transmembrane region" description="Helical; Name=5" evidence="2">
    <location>
        <begin position="697"/>
        <end position="715"/>
    </location>
</feature>
<feature type="topological domain" description="Extracellular" evidence="2">
    <location>
        <begin position="716"/>
        <end position="731"/>
    </location>
</feature>
<feature type="transmembrane region" description="Helical; Name=6" evidence="2">
    <location>
        <begin position="732"/>
        <end position="751"/>
    </location>
</feature>
<feature type="topological domain" description="Cytoplasmic" evidence="2">
    <location>
        <begin position="752"/>
        <end position="801"/>
    </location>
</feature>
<feature type="transmembrane region" description="Helical; Name=7" evidence="2">
    <location>
        <begin position="802"/>
        <end position="822"/>
    </location>
</feature>
<feature type="topological domain" description="Extracellular" evidence="2">
    <location>
        <begin position="823"/>
        <end position="834"/>
    </location>
</feature>
<feature type="transmembrane region" description="Helical; Name=8" evidence="2">
    <location>
        <begin position="835"/>
        <end position="851"/>
    </location>
</feature>
<feature type="topological domain" description="Cytoplasmic" evidence="2">
    <location>
        <begin position="852"/>
        <end position="895"/>
    </location>
</feature>
<feature type="region of interest" description="Disordered" evidence="3">
    <location>
        <begin position="1"/>
        <end position="53"/>
    </location>
</feature>
<feature type="compositionally biased region" description="Basic and acidic residues" evidence="3">
    <location>
        <begin position="7"/>
        <end position="16"/>
    </location>
</feature>
<feature type="compositionally biased region" description="Acidic residues" evidence="3">
    <location>
        <begin position="37"/>
        <end position="46"/>
    </location>
</feature>
<feature type="active site" description="4-aspartylphosphate intermediate" evidence="1">
    <location>
        <position position="355"/>
    </location>
</feature>
<feature type="binding site" evidence="1">
    <location>
        <position position="611"/>
    </location>
    <ligand>
        <name>Mg(2+)</name>
        <dbReference type="ChEBI" id="CHEBI:18420"/>
    </ligand>
</feature>
<feature type="binding site" evidence="1">
    <location>
        <position position="615"/>
    </location>
    <ligand>
        <name>Mg(2+)</name>
        <dbReference type="ChEBI" id="CHEBI:18420"/>
    </ligand>
</feature>
<gene>
    <name type="primary">PMA1</name>
</gene>
<protein>
    <recommendedName>
        <fullName>Plasma membrane ATPase 1</fullName>
        <ecNumber>7.1.2.1</ecNumber>
    </recommendedName>
    <alternativeName>
        <fullName>Proton pump 1</fullName>
    </alternativeName>
</protein>
<accession>P28877</accession>
<organism>
    <name type="scientific">Candida albicans</name>
    <name type="common">Yeast</name>
    <dbReference type="NCBI Taxonomy" id="5476"/>
    <lineage>
        <taxon>Eukaryota</taxon>
        <taxon>Fungi</taxon>
        <taxon>Dikarya</taxon>
        <taxon>Ascomycota</taxon>
        <taxon>Saccharomycotina</taxon>
        <taxon>Pichiomycetes</taxon>
        <taxon>Debaryomycetaceae</taxon>
        <taxon>Candida/Lodderomyces clade</taxon>
        <taxon>Candida</taxon>
    </lineage>
</organism>
<proteinExistence type="evidence at protein level"/>
<keyword id="KW-0067">ATP-binding</keyword>
<keyword id="KW-1003">Cell membrane</keyword>
<keyword id="KW-0903">Direct protein sequencing</keyword>
<keyword id="KW-0375">Hydrogen ion transport</keyword>
<keyword id="KW-0406">Ion transport</keyword>
<keyword id="KW-0460">Magnesium</keyword>
<keyword id="KW-0472">Membrane</keyword>
<keyword id="KW-0479">Metal-binding</keyword>
<keyword id="KW-0547">Nucleotide-binding</keyword>
<keyword id="KW-0597">Phosphoprotein</keyword>
<keyword id="KW-1278">Translocase</keyword>
<keyword id="KW-0812">Transmembrane</keyword>
<keyword id="KW-1133">Transmembrane helix</keyword>
<keyword id="KW-0813">Transport</keyword>
<sequence length="895" mass="97460">MSATEPTNEKVDKIVSDDEDEDIDQLVADLQSNPGAGDEEEEEENDSSFKAVPEELLQTDPRVGLTDDEVTKRRKRYGLNQMAEEQENLVLKFVMFFVGPIQFVMEAAAVLAAGLEDWVDFGVICALLLLNAFVGFIQEYQAGSIVDELKKTLANSALVVRNGQLVEIPANEVVPGDILQLEDGTVIPTDGRIVSEDCLLQVDQSAITGESLAVDKRSGDSCYSSSTVKTGEAFMIVTATGDSTFVGRAAALVNKASAGTGHFTEVLNGIGTTLLVFVIVTLLVVWVACFYRTVRIVPILRYTLAITIIGVPVGLPAVVTTTMAVGAAYLAKKQAIVQKLSAIESLAGVEILCSDKTGTLTKNKLSLHEPYTVEGVEPDDLMLTACLAASRKKKGLDAIDKAFLKSLINYPRAKAALPKYKVIEFQPFDPVSKKVTAIVESPEGERIICVKGAPLFVLKTVEDDHPIPEDVHENYQNTVAEFASRGFRSLGVARKRGEGHWEILGIMPCMDPPRDDTAATVNEARRLGLRVKMLTGDAVGIAKETCRQLGLGTNIYDADRLGLSGGGDMAGSEIADFVENADGFAEGFPTNKYNAVEILQSRGYLVAMTGDGVNDAPSLKKADTGIAVEGATDAARSAADIVFLAPGLSAIIDALKTSRQIFHRMYSYVVYRIALSLHLELFLGLWIAILNRSLDINLIVFIAIFADVATLAIAYDNAPYDPKPVKWNLPRLWGMSIVLGIILAIGTWITLTTMLLPKGGIIQNFGGLDGILFLQISLTENWLIFVTRAQGPFWSSIPSWQLSGAVLIVDIIATCFTLFGWWSQNWTDIVTVVRTWIWSFGVFCVMGGAYYLMSTSEAFDNFCNGRKPQQHTDKRSLEDFLVSMQRVSTQHEKST</sequence>